<name>CPAR_ASPOZ</name>
<dbReference type="EMBL" id="AB506492">
    <property type="protein sequence ID" value="BAK26563.1"/>
    <property type="molecule type" value="Genomic_DNA"/>
</dbReference>
<dbReference type="SMR" id="F5HN75"/>
<dbReference type="VEuPathDB" id="FungiDB:AO090103000027"/>
<dbReference type="GO" id="GO:0005634">
    <property type="term" value="C:nucleus"/>
    <property type="evidence" value="ECO:0007669"/>
    <property type="project" value="UniProtKB-SubCell"/>
</dbReference>
<dbReference type="GO" id="GO:0003677">
    <property type="term" value="F:DNA binding"/>
    <property type="evidence" value="ECO:0007669"/>
    <property type="project" value="UniProtKB-KW"/>
</dbReference>
<dbReference type="GO" id="GO:0000981">
    <property type="term" value="F:DNA-binding transcription factor activity, RNA polymerase II-specific"/>
    <property type="evidence" value="ECO:0007669"/>
    <property type="project" value="InterPro"/>
</dbReference>
<dbReference type="GO" id="GO:0008270">
    <property type="term" value="F:zinc ion binding"/>
    <property type="evidence" value="ECO:0007669"/>
    <property type="project" value="InterPro"/>
</dbReference>
<dbReference type="GO" id="GO:0006351">
    <property type="term" value="P:DNA-templated transcription"/>
    <property type="evidence" value="ECO:0007669"/>
    <property type="project" value="InterPro"/>
</dbReference>
<dbReference type="CDD" id="cd12148">
    <property type="entry name" value="fungal_TF_MHR"/>
    <property type="match status" value="1"/>
</dbReference>
<dbReference type="InterPro" id="IPR052761">
    <property type="entry name" value="Fungal_Detox/Toxin_TFs"/>
</dbReference>
<dbReference type="InterPro" id="IPR007219">
    <property type="entry name" value="Transcription_factor_dom_fun"/>
</dbReference>
<dbReference type="InterPro" id="IPR001138">
    <property type="entry name" value="Zn2Cys6_DnaBD"/>
</dbReference>
<dbReference type="PANTHER" id="PTHR47425">
    <property type="entry name" value="FARB-RELATED"/>
    <property type="match status" value="1"/>
</dbReference>
<dbReference type="PANTHER" id="PTHR47425:SF2">
    <property type="entry name" value="FARB-RELATED"/>
    <property type="match status" value="1"/>
</dbReference>
<dbReference type="Pfam" id="PF04082">
    <property type="entry name" value="Fungal_trans"/>
    <property type="match status" value="1"/>
</dbReference>
<dbReference type="SMART" id="SM00906">
    <property type="entry name" value="Fungal_trans"/>
    <property type="match status" value="1"/>
</dbReference>
<dbReference type="PROSITE" id="PS00463">
    <property type="entry name" value="ZN2_CY6_FUNGAL_1"/>
    <property type="match status" value="1"/>
</dbReference>
<dbReference type="PROSITE" id="PS50048">
    <property type="entry name" value="ZN2_CY6_FUNGAL_2"/>
    <property type="match status" value="1"/>
</dbReference>
<keyword id="KW-0238">DNA-binding</keyword>
<keyword id="KW-0479">Metal-binding</keyword>
<keyword id="KW-0539">Nucleus</keyword>
<keyword id="KW-0804">Transcription</keyword>
<keyword id="KW-0805">Transcription regulation</keyword>
<keyword id="KW-0862">Zinc</keyword>
<feature type="chain" id="PRO_0000445389" description="Transcription factor cpaR">
    <location>
        <begin position="1"/>
        <end position="598"/>
    </location>
</feature>
<feature type="DNA-binding region" description="Zn(2)-C6 fungal-type" evidence="1">
    <location>
        <begin position="22"/>
        <end position="51"/>
    </location>
</feature>
<evidence type="ECO:0000255" key="1">
    <source>
        <dbReference type="PROSITE-ProRule" id="PRU00227"/>
    </source>
</evidence>
<evidence type="ECO:0000269" key="2">
    <source>
    </source>
</evidence>
<evidence type="ECO:0000303" key="3">
    <source>
    </source>
</evidence>
<comment type="function">
    <text evidence="2">Transcription factor; part of the gene cluster that mediates the biosynthesis of the fungal neurotoxin cyclopiazonic acid (CPA), a nanomolar inhibitor of Ca(2+)-ATPase with a unique pentacyclic indole tetramic acid scaffold.</text>
</comment>
<comment type="subcellular location">
    <subcellularLocation>
        <location evidence="1">Nucleus</location>
    </subcellularLocation>
</comment>
<comment type="disruption phenotype">
    <text evidence="2">Has no significant effect on the synthesis of 2-oxocyclopiazonic acid, cyclopiazonic acid (CPA) and their biosynthetic intermediates.</text>
</comment>
<gene>
    <name evidence="3" type="primary">cpaR</name>
</gene>
<proteinExistence type="inferred from homology"/>
<organism>
    <name type="scientific">Aspergillus oryzae</name>
    <name type="common">Yellow koji mold</name>
    <dbReference type="NCBI Taxonomy" id="5062"/>
    <lineage>
        <taxon>Eukaryota</taxon>
        <taxon>Fungi</taxon>
        <taxon>Dikarya</taxon>
        <taxon>Ascomycota</taxon>
        <taxon>Pezizomycotina</taxon>
        <taxon>Eurotiomycetes</taxon>
        <taxon>Eurotiomycetidae</taxon>
        <taxon>Eurotiales</taxon>
        <taxon>Aspergillaceae</taxon>
        <taxon>Aspergillus</taxon>
        <taxon>Aspergillus subgen. Circumdati</taxon>
    </lineage>
</organism>
<reference key="1">
    <citation type="journal article" date="2011" name="ChemBioChem">
        <title>Genetic safeguard against mycotoxin cyclopiazonic acid production in Aspergillus oryzae.</title>
        <authorList>
            <person name="Kato N."/>
            <person name="Tokuoka M."/>
            <person name="Shinohara Y."/>
            <person name="Kawatani M."/>
            <person name="Uramoto M."/>
            <person name="Seshime Y."/>
            <person name="Fujii I."/>
            <person name="Kitamoto K."/>
            <person name="Takahashi T."/>
            <person name="Takahashi S."/>
            <person name="Koyama Y."/>
            <person name="Osada H."/>
        </authorList>
    </citation>
    <scope>NUCLEOTIDE SEQUENCE [GENOMIC DNA]</scope>
    <scope>DISRUPTION PHENOTYPE</scope>
    <scope>FUNCTION</scope>
    <source>
        <strain>NBRC 4177</strain>
    </source>
</reference>
<sequence length="598" mass="67672">MPETHQNTLTWKGTRLPAGEACNGCRERKRRCVRRKRELPCLSCQAENRPCDVSRYRRRRRRRRGPNKRNCKSLRVLGGQSAEPFNMHQQPDTDSCSEIQHGIETDECGSQCRIPSQSPGPYPEPQPAASTYSLCLPSYVTGVPKHLALVTLNALREKGAFTLPPAEIQTYLISSYIMHVHPDMPFLDLERLLEAVILRCRGRQTSMLLLQAVMFAGSIFLDPVYLHLMGYTSRRAAMRDLFGRAKLLYECGFEVQPTYKLQSLLLFTLFHEDDLAGSSFWMGEAWNLAKTIGLQYDLQEVPVDESSSELAFRRRLWWCVYTRDRLLALSTRSAMHISDGDYNVPMLALADFKSCFGTAEAYRALQLDSDLRTDGTKTALALTFIYKTKLSQLIGRVLMSQYTIGSASPTTMLYYPRPTPISLSDFLGMENDLDVWETSLPSLLEFPLPLLSPVSQAEKIIYAQRAMLHMIYLTCINALHRPWSSSAQPTSSDPWEGAFRDLSAWKIEYASQAILMIATHLHSIGLTNFLADTAVPSLLSAMITHIVRLNSDILVAPEANAVCFVQGWECLQGLREKYEWARHAAAFIRFTTRSLRTG</sequence>
<protein>
    <recommendedName>
        <fullName evidence="3">Transcription factor cpaR</fullName>
    </recommendedName>
    <alternativeName>
        <fullName evidence="3">Cyclopiazonic acid biosynthesis cluster protein R</fullName>
    </alternativeName>
</protein>
<accession>F5HN75</accession>